<feature type="chain" id="PRO_0000163941" description="tRNA dimethylallyltransferase">
    <location>
        <begin position="1"/>
        <end position="314"/>
    </location>
</feature>
<feature type="binding site" evidence="1">
    <location>
        <begin position="12"/>
        <end position="19"/>
    </location>
    <ligand>
        <name>ATP</name>
        <dbReference type="ChEBI" id="CHEBI:30616"/>
    </ligand>
</feature>
<feature type="binding site" evidence="1">
    <location>
        <begin position="14"/>
        <end position="19"/>
    </location>
    <ligand>
        <name>substrate</name>
    </ligand>
</feature>
<feature type="site" description="Interaction with substrate tRNA" evidence="1">
    <location>
        <position position="106"/>
    </location>
</feature>
<feature type="site" description="Interaction with substrate tRNA" evidence="1">
    <location>
        <position position="127"/>
    </location>
</feature>
<proteinExistence type="inferred from homology"/>
<organism>
    <name type="scientific">Mycolicibacterium paratuberculosis (strain ATCC BAA-968 / K-10)</name>
    <name type="common">Mycobacterium paratuberculosis</name>
    <dbReference type="NCBI Taxonomy" id="262316"/>
    <lineage>
        <taxon>Bacteria</taxon>
        <taxon>Bacillati</taxon>
        <taxon>Actinomycetota</taxon>
        <taxon>Actinomycetes</taxon>
        <taxon>Mycobacteriales</taxon>
        <taxon>Mycobacteriaceae</taxon>
        <taxon>Mycobacterium</taxon>
        <taxon>Mycobacterium avium complex (MAC)</taxon>
    </lineage>
</organism>
<name>MIAA_MYCPA</name>
<protein>
    <recommendedName>
        <fullName evidence="1">tRNA dimethylallyltransferase</fullName>
        <ecNumber evidence="1">2.5.1.75</ecNumber>
    </recommendedName>
    <alternativeName>
        <fullName evidence="1">Dimethylallyl diphosphate:tRNA dimethylallyltransferase</fullName>
        <shortName evidence="1">DMAPP:tRNA dimethylallyltransferase</shortName>
        <shortName evidence="1">DMATase</shortName>
    </alternativeName>
    <alternativeName>
        <fullName evidence="1">Isopentenyl-diphosphate:tRNA isopentenyltransferase</fullName>
        <shortName evidence="1">IPP transferase</shortName>
        <shortName evidence="1">IPPT</shortName>
        <shortName evidence="1">IPTase</shortName>
    </alternativeName>
</protein>
<gene>
    <name evidence="1" type="primary">miaA</name>
    <name type="ordered locus">MAP_2841c</name>
</gene>
<dbReference type="EC" id="2.5.1.75" evidence="1"/>
<dbReference type="EMBL" id="AE016958">
    <property type="protein sequence ID" value="AAS05158.1"/>
    <property type="molecule type" value="Genomic_DNA"/>
</dbReference>
<dbReference type="SMR" id="Q73W20"/>
<dbReference type="STRING" id="262316.MAP_2841c"/>
<dbReference type="KEGG" id="mpa:MAP_2841c"/>
<dbReference type="PATRIC" id="fig|262316.17.peg.3010"/>
<dbReference type="eggNOG" id="COG0324">
    <property type="taxonomic scope" value="Bacteria"/>
</dbReference>
<dbReference type="HOGENOM" id="CLU_032616_0_1_11"/>
<dbReference type="Proteomes" id="UP000000580">
    <property type="component" value="Chromosome"/>
</dbReference>
<dbReference type="GO" id="GO:0005524">
    <property type="term" value="F:ATP binding"/>
    <property type="evidence" value="ECO:0007669"/>
    <property type="project" value="UniProtKB-UniRule"/>
</dbReference>
<dbReference type="GO" id="GO:0052381">
    <property type="term" value="F:tRNA dimethylallyltransferase activity"/>
    <property type="evidence" value="ECO:0007669"/>
    <property type="project" value="UniProtKB-UniRule"/>
</dbReference>
<dbReference type="GO" id="GO:0006400">
    <property type="term" value="P:tRNA modification"/>
    <property type="evidence" value="ECO:0007669"/>
    <property type="project" value="TreeGrafter"/>
</dbReference>
<dbReference type="FunFam" id="1.10.20.140:FF:000001">
    <property type="entry name" value="tRNA dimethylallyltransferase"/>
    <property type="match status" value="1"/>
</dbReference>
<dbReference type="Gene3D" id="1.10.20.140">
    <property type="match status" value="1"/>
</dbReference>
<dbReference type="Gene3D" id="3.40.50.300">
    <property type="entry name" value="P-loop containing nucleotide triphosphate hydrolases"/>
    <property type="match status" value="1"/>
</dbReference>
<dbReference type="HAMAP" id="MF_00185">
    <property type="entry name" value="IPP_trans"/>
    <property type="match status" value="1"/>
</dbReference>
<dbReference type="InterPro" id="IPR039657">
    <property type="entry name" value="Dimethylallyltransferase"/>
</dbReference>
<dbReference type="InterPro" id="IPR018022">
    <property type="entry name" value="IPT"/>
</dbReference>
<dbReference type="InterPro" id="IPR027417">
    <property type="entry name" value="P-loop_NTPase"/>
</dbReference>
<dbReference type="NCBIfam" id="TIGR00174">
    <property type="entry name" value="miaA"/>
    <property type="match status" value="1"/>
</dbReference>
<dbReference type="PANTHER" id="PTHR11088">
    <property type="entry name" value="TRNA DIMETHYLALLYLTRANSFERASE"/>
    <property type="match status" value="1"/>
</dbReference>
<dbReference type="PANTHER" id="PTHR11088:SF60">
    <property type="entry name" value="TRNA DIMETHYLALLYLTRANSFERASE"/>
    <property type="match status" value="1"/>
</dbReference>
<dbReference type="Pfam" id="PF01715">
    <property type="entry name" value="IPPT"/>
    <property type="match status" value="1"/>
</dbReference>
<dbReference type="SUPFAM" id="SSF52540">
    <property type="entry name" value="P-loop containing nucleoside triphosphate hydrolases"/>
    <property type="match status" value="1"/>
</dbReference>
<comment type="function">
    <text evidence="1">Catalyzes the transfer of a dimethylallyl group onto the adenine at position 37 in tRNAs that read codons beginning with uridine, leading to the formation of N6-(dimethylallyl)adenosine (i(6)A).</text>
</comment>
<comment type="catalytic activity">
    <reaction evidence="1">
        <text>adenosine(37) in tRNA + dimethylallyl diphosphate = N(6)-dimethylallyladenosine(37) in tRNA + diphosphate</text>
        <dbReference type="Rhea" id="RHEA:26482"/>
        <dbReference type="Rhea" id="RHEA-COMP:10162"/>
        <dbReference type="Rhea" id="RHEA-COMP:10375"/>
        <dbReference type="ChEBI" id="CHEBI:33019"/>
        <dbReference type="ChEBI" id="CHEBI:57623"/>
        <dbReference type="ChEBI" id="CHEBI:74411"/>
        <dbReference type="ChEBI" id="CHEBI:74415"/>
        <dbReference type="EC" id="2.5.1.75"/>
    </reaction>
</comment>
<comment type="cofactor">
    <cofactor evidence="1">
        <name>Mg(2+)</name>
        <dbReference type="ChEBI" id="CHEBI:18420"/>
    </cofactor>
</comment>
<comment type="subunit">
    <text evidence="1">Monomer.</text>
</comment>
<comment type="similarity">
    <text evidence="1">Belongs to the IPP transferase family.</text>
</comment>
<evidence type="ECO:0000255" key="1">
    <source>
        <dbReference type="HAMAP-Rule" id="MF_00185"/>
    </source>
</evidence>
<sequence>MTAAVRPLPIIGPTGTGKSQLALDVAERLGPLGAEIVNADAMQLYRGMDIGTAKLPVDARRGIPHHQLDVLDVTQTATVARYQRAAAADIEAILAAGAVPIIVGGSMLYIQSLLDDWSFPATDPRVRARWERRLGEVGVGELHAELARRDPAAAAAILPTDARRTVRALEVIELTGRPFAASAPRIGAPRWDTVIIGLDCDTTLLDERLARRTDAMFEQGLVAEVTGLLGRGLRDGVTAARALGYAQVIAALDAGGGDEQLRQAREQTYAGTRRYVRRQRSWFRRDHRVRWLDAGACSPPRLADAALEAWRHVS</sequence>
<keyword id="KW-0067">ATP-binding</keyword>
<keyword id="KW-0460">Magnesium</keyword>
<keyword id="KW-0547">Nucleotide-binding</keyword>
<keyword id="KW-1185">Reference proteome</keyword>
<keyword id="KW-0808">Transferase</keyword>
<keyword id="KW-0819">tRNA processing</keyword>
<accession>Q73W20</accession>
<reference key="1">
    <citation type="journal article" date="2005" name="Proc. Natl. Acad. Sci. U.S.A.">
        <title>The complete genome sequence of Mycobacterium avium subspecies paratuberculosis.</title>
        <authorList>
            <person name="Li L."/>
            <person name="Bannantine J.P."/>
            <person name="Zhang Q."/>
            <person name="Amonsin A."/>
            <person name="May B.J."/>
            <person name="Alt D."/>
            <person name="Banerji N."/>
            <person name="Kanjilal S."/>
            <person name="Kapur V."/>
        </authorList>
    </citation>
    <scope>NUCLEOTIDE SEQUENCE [LARGE SCALE GENOMIC DNA]</scope>
    <source>
        <strain>ATCC BAA-968 / K-10</strain>
    </source>
</reference>